<evidence type="ECO:0000250" key="1">
    <source>
        <dbReference type="UniProtKB" id="O55091"/>
    </source>
</evidence>
<evidence type="ECO:0000255" key="2">
    <source>
        <dbReference type="PROSITE-ProRule" id="PRU00179"/>
    </source>
</evidence>
<evidence type="ECO:0000256" key="3">
    <source>
        <dbReference type="SAM" id="MobiDB-lite"/>
    </source>
</evidence>
<evidence type="ECO:0000305" key="4"/>
<dbReference type="EMBL" id="BC157649">
    <property type="protein sequence ID" value="AAI57650.1"/>
    <property type="molecule type" value="mRNA"/>
</dbReference>
<dbReference type="SMR" id="A9UMG5"/>
<dbReference type="InParanoid" id="A9UMG5"/>
<dbReference type="Proteomes" id="UP000008143">
    <property type="component" value="Unplaced"/>
</dbReference>
<dbReference type="GO" id="GO:0005737">
    <property type="term" value="C:cytoplasm"/>
    <property type="evidence" value="ECO:0000250"/>
    <property type="project" value="UniProtKB"/>
</dbReference>
<dbReference type="GO" id="GO:0140311">
    <property type="term" value="F:protein sequestering activity"/>
    <property type="evidence" value="ECO:0000250"/>
    <property type="project" value="UniProtKB"/>
</dbReference>
<dbReference type="GO" id="GO:0034198">
    <property type="term" value="P:cellular response to amino acid starvation"/>
    <property type="evidence" value="ECO:0000250"/>
    <property type="project" value="UniProtKB"/>
</dbReference>
<dbReference type="GO" id="GO:0140469">
    <property type="term" value="P:GCN2-mediated signaling"/>
    <property type="evidence" value="ECO:0000250"/>
    <property type="project" value="UniProtKB"/>
</dbReference>
<dbReference type="GO" id="GO:0035556">
    <property type="term" value="P:intracellular signal transduction"/>
    <property type="evidence" value="ECO:0000250"/>
    <property type="project" value="UniProtKB"/>
</dbReference>
<dbReference type="GO" id="GO:0000122">
    <property type="term" value="P:negative regulation of transcription by RNA polymerase II"/>
    <property type="evidence" value="ECO:0000250"/>
    <property type="project" value="UniProtKB"/>
</dbReference>
<dbReference type="GO" id="GO:1990138">
    <property type="term" value="P:neuron projection extension"/>
    <property type="evidence" value="ECO:0000250"/>
    <property type="project" value="UniProtKB"/>
</dbReference>
<dbReference type="GO" id="GO:0045666">
    <property type="term" value="P:positive regulation of neuron differentiation"/>
    <property type="evidence" value="ECO:0000250"/>
    <property type="project" value="UniProtKB"/>
</dbReference>
<dbReference type="GO" id="GO:1990611">
    <property type="term" value="P:regulation of cytoplasmic translational initiation in response to stress"/>
    <property type="evidence" value="ECO:0000250"/>
    <property type="project" value="UniProtKB"/>
</dbReference>
<dbReference type="CDD" id="cd23821">
    <property type="entry name" value="RWD_IMPACT"/>
    <property type="match status" value="1"/>
</dbReference>
<dbReference type="FunFam" id="3.10.110.10:FF:000066">
    <property type="entry name" value="IMPACT isoform 1"/>
    <property type="match status" value="1"/>
</dbReference>
<dbReference type="FunFam" id="3.30.230.30:FF:000001">
    <property type="entry name" value="IMPACT isoform 1"/>
    <property type="match status" value="1"/>
</dbReference>
<dbReference type="Gene3D" id="3.30.230.30">
    <property type="entry name" value="Impact, N-terminal domain"/>
    <property type="match status" value="1"/>
</dbReference>
<dbReference type="Gene3D" id="3.10.110.10">
    <property type="entry name" value="Ubiquitin Conjugating Enzyme"/>
    <property type="match status" value="1"/>
</dbReference>
<dbReference type="InterPro" id="IPR023582">
    <property type="entry name" value="Impact"/>
</dbReference>
<dbReference type="InterPro" id="IPR001498">
    <property type="entry name" value="Impact_N"/>
</dbReference>
<dbReference type="InterPro" id="IPR036956">
    <property type="entry name" value="Impact_N_sf"/>
</dbReference>
<dbReference type="InterPro" id="IPR020568">
    <property type="entry name" value="Ribosomal_Su5_D2-typ_SF"/>
</dbReference>
<dbReference type="InterPro" id="IPR006575">
    <property type="entry name" value="RWD_dom"/>
</dbReference>
<dbReference type="InterPro" id="IPR016135">
    <property type="entry name" value="UBQ-conjugating_enzyme/RWD"/>
</dbReference>
<dbReference type="InterPro" id="IPR020569">
    <property type="entry name" value="UPF0029_Impact_CS"/>
</dbReference>
<dbReference type="PANTHER" id="PTHR16301">
    <property type="entry name" value="IMPACT-RELATED"/>
    <property type="match status" value="1"/>
</dbReference>
<dbReference type="PANTHER" id="PTHR16301:SF25">
    <property type="entry name" value="PROTEIN IMPACT"/>
    <property type="match status" value="1"/>
</dbReference>
<dbReference type="Pfam" id="PF05773">
    <property type="entry name" value="RWD"/>
    <property type="match status" value="1"/>
</dbReference>
<dbReference type="Pfam" id="PF01205">
    <property type="entry name" value="UPF0029"/>
    <property type="match status" value="1"/>
</dbReference>
<dbReference type="SMART" id="SM00591">
    <property type="entry name" value="RWD"/>
    <property type="match status" value="1"/>
</dbReference>
<dbReference type="SUPFAM" id="SSF54211">
    <property type="entry name" value="Ribosomal protein S5 domain 2-like"/>
    <property type="match status" value="1"/>
</dbReference>
<dbReference type="SUPFAM" id="SSF54495">
    <property type="entry name" value="UBC-like"/>
    <property type="match status" value="1"/>
</dbReference>
<dbReference type="PROSITE" id="PS50908">
    <property type="entry name" value="RWD"/>
    <property type="match status" value="1"/>
</dbReference>
<dbReference type="PROSITE" id="PS00910">
    <property type="entry name" value="UPF0029"/>
    <property type="match status" value="1"/>
</dbReference>
<organism>
    <name type="scientific">Xenopus tropicalis</name>
    <name type="common">Western clawed frog</name>
    <name type="synonym">Silurana tropicalis</name>
    <dbReference type="NCBI Taxonomy" id="8364"/>
    <lineage>
        <taxon>Eukaryota</taxon>
        <taxon>Metazoa</taxon>
        <taxon>Chordata</taxon>
        <taxon>Craniata</taxon>
        <taxon>Vertebrata</taxon>
        <taxon>Euteleostomi</taxon>
        <taxon>Amphibia</taxon>
        <taxon>Batrachia</taxon>
        <taxon>Anura</taxon>
        <taxon>Pipoidea</taxon>
        <taxon>Pipidae</taxon>
        <taxon>Xenopodinae</taxon>
        <taxon>Xenopus</taxon>
        <taxon>Silurana</taxon>
    </lineage>
</organism>
<protein>
    <recommendedName>
        <fullName>Protein IMPACT-B</fullName>
    </recommendedName>
    <alternativeName>
        <fullName>Imprinted and ancient gene protein homolog B</fullName>
    </alternativeName>
</protein>
<proteinExistence type="evidence at transcript level"/>
<feature type="chain" id="PRO_0000330857" description="Protein IMPACT-B">
    <location>
        <begin position="1"/>
        <end position="317"/>
    </location>
</feature>
<feature type="domain" description="RWD" evidence="2">
    <location>
        <begin position="17"/>
        <end position="118"/>
    </location>
</feature>
<feature type="region of interest" description="Disordered" evidence="3">
    <location>
        <begin position="296"/>
        <end position="317"/>
    </location>
</feature>
<feature type="compositionally biased region" description="Basic residues" evidence="3">
    <location>
        <begin position="306"/>
        <end position="317"/>
    </location>
</feature>
<comment type="function">
    <text evidence="1">Translational regulator that ensures constant high levels of translation upon a variety of stress conditions, such as amino acid starvation, UV-C irradiation, proteasome inhibitor treatment and glucose deprivation. Plays a role as a negative regulator of the EIF2AK4/GCN2 kinase activity; impairs GCN1-mediated EIF2AK4/GCN2 activation, and hence EIF2AK4/GCN2-mediated eIF-2-alpha phosphorylation and subsequent down-regulation of protein synthesis. Plays a role in differentiation of neuronal cells by stimulating neurite outgrowth.</text>
</comment>
<comment type="subunit">
    <text evidence="1">Interacts with GCN1; prevents the interaction of GCN1 with EIF2AK4/GCN2 and inhibits EIF2AK4/GCN2 kinase activity. Interaction with RPL39; this interaction occurs in a GCN1-independent manner. Associates with ribosomes; this interaction occurs in a GCN1-independent manner. Associates with actin; this interaction occurs in a GCN1-independent manner.</text>
</comment>
<comment type="subcellular location">
    <subcellularLocation>
        <location evidence="1">Cytoplasm</location>
    </subcellularLocation>
</comment>
<comment type="similarity">
    <text evidence="4">Belongs to the IMPACT family.</text>
</comment>
<accession>A9UMG5</accession>
<reference key="1">
    <citation type="submission" date="2007-12" db="EMBL/GenBank/DDBJ databases">
        <authorList>
            <consortium name="NIH - Xenopus Gene Collection (XGC) project"/>
        </authorList>
    </citation>
    <scope>NUCLEOTIDE SEQUENCE [LARGE SCALE MRNA]</scope>
    <source>
        <tissue>Spleen</tissue>
    </source>
</reference>
<sequence>MDKLEDHDDNNLQSQIEEIEALSSIYGEEWCVIDEAARVFCIRISETQQPKWTVCLQIILPPDYPSSAPPIYQINAAWLRGQDRMTLSNSLEEIYVENAGESILYLWVEKIREFLTEKSQHSDGPDTCKTVMTEEGGHDCDEDDLPDISVLKLSSQSEQIFSPASDDEELPLIKHGESITDRRSTFQPHLSAVENPKQVQRVLNKLYENKKIASATHNIYAYRIYCQEKNSVLQDCEDDGETAAGGRLLHLLQILDVRNVLVVVSRWYGGILLGPDRFKHINNCARTILIQEGYADSTEETSKAGGKSKKPKSKKTK</sequence>
<gene>
    <name type="primary">impact-B</name>
</gene>
<keyword id="KW-0963">Cytoplasm</keyword>
<keyword id="KW-0221">Differentiation</keyword>
<keyword id="KW-0524">Neurogenesis</keyword>
<keyword id="KW-1185">Reference proteome</keyword>
<keyword id="KW-0678">Repressor</keyword>
<keyword id="KW-0346">Stress response</keyword>
<keyword id="KW-0810">Translation regulation</keyword>
<name>IMPTB_XENTR</name>